<dbReference type="EC" id="6.1.1.20" evidence="1"/>
<dbReference type="EMBL" id="CP000094">
    <property type="protein sequence ID" value="ABA73678.1"/>
    <property type="molecule type" value="Genomic_DNA"/>
</dbReference>
<dbReference type="RefSeq" id="WP_011333387.1">
    <property type="nucleotide sequence ID" value="NC_007492.2"/>
</dbReference>
<dbReference type="SMR" id="Q3KEX8"/>
<dbReference type="KEGG" id="pfo:Pfl01_1935"/>
<dbReference type="eggNOG" id="COG0016">
    <property type="taxonomic scope" value="Bacteria"/>
</dbReference>
<dbReference type="HOGENOM" id="CLU_025086_0_1_6"/>
<dbReference type="Proteomes" id="UP000002704">
    <property type="component" value="Chromosome"/>
</dbReference>
<dbReference type="GO" id="GO:0005737">
    <property type="term" value="C:cytoplasm"/>
    <property type="evidence" value="ECO:0007669"/>
    <property type="project" value="UniProtKB-SubCell"/>
</dbReference>
<dbReference type="GO" id="GO:0005524">
    <property type="term" value="F:ATP binding"/>
    <property type="evidence" value="ECO:0007669"/>
    <property type="project" value="UniProtKB-UniRule"/>
</dbReference>
<dbReference type="GO" id="GO:0000287">
    <property type="term" value="F:magnesium ion binding"/>
    <property type="evidence" value="ECO:0007669"/>
    <property type="project" value="UniProtKB-UniRule"/>
</dbReference>
<dbReference type="GO" id="GO:0004826">
    <property type="term" value="F:phenylalanine-tRNA ligase activity"/>
    <property type="evidence" value="ECO:0007669"/>
    <property type="project" value="UniProtKB-UniRule"/>
</dbReference>
<dbReference type="GO" id="GO:0000049">
    <property type="term" value="F:tRNA binding"/>
    <property type="evidence" value="ECO:0007669"/>
    <property type="project" value="InterPro"/>
</dbReference>
<dbReference type="GO" id="GO:0006432">
    <property type="term" value="P:phenylalanyl-tRNA aminoacylation"/>
    <property type="evidence" value="ECO:0007669"/>
    <property type="project" value="UniProtKB-UniRule"/>
</dbReference>
<dbReference type="CDD" id="cd00496">
    <property type="entry name" value="PheRS_alpha_core"/>
    <property type="match status" value="1"/>
</dbReference>
<dbReference type="FunFam" id="3.30.930.10:FF:000003">
    <property type="entry name" value="Phenylalanine--tRNA ligase alpha subunit"/>
    <property type="match status" value="1"/>
</dbReference>
<dbReference type="Gene3D" id="3.30.930.10">
    <property type="entry name" value="Bira Bifunctional Protein, Domain 2"/>
    <property type="match status" value="1"/>
</dbReference>
<dbReference type="HAMAP" id="MF_00281">
    <property type="entry name" value="Phe_tRNA_synth_alpha1"/>
    <property type="match status" value="1"/>
</dbReference>
<dbReference type="InterPro" id="IPR006195">
    <property type="entry name" value="aa-tRNA-synth_II"/>
</dbReference>
<dbReference type="InterPro" id="IPR045864">
    <property type="entry name" value="aa-tRNA-synth_II/BPL/LPL"/>
</dbReference>
<dbReference type="InterPro" id="IPR004529">
    <property type="entry name" value="Phe-tRNA-synth_IIc_asu"/>
</dbReference>
<dbReference type="InterPro" id="IPR004188">
    <property type="entry name" value="Phe-tRNA_ligase_II_N"/>
</dbReference>
<dbReference type="InterPro" id="IPR022911">
    <property type="entry name" value="Phe_tRNA_ligase_alpha1_bac"/>
</dbReference>
<dbReference type="InterPro" id="IPR002319">
    <property type="entry name" value="Phenylalanyl-tRNA_Synthase"/>
</dbReference>
<dbReference type="InterPro" id="IPR010978">
    <property type="entry name" value="tRNA-bd_arm"/>
</dbReference>
<dbReference type="NCBIfam" id="TIGR00468">
    <property type="entry name" value="pheS"/>
    <property type="match status" value="1"/>
</dbReference>
<dbReference type="PANTHER" id="PTHR11538:SF41">
    <property type="entry name" value="PHENYLALANINE--TRNA LIGASE, MITOCHONDRIAL"/>
    <property type="match status" value="1"/>
</dbReference>
<dbReference type="PANTHER" id="PTHR11538">
    <property type="entry name" value="PHENYLALANYL-TRNA SYNTHETASE"/>
    <property type="match status" value="1"/>
</dbReference>
<dbReference type="Pfam" id="PF02912">
    <property type="entry name" value="Phe_tRNA-synt_N"/>
    <property type="match status" value="1"/>
</dbReference>
<dbReference type="Pfam" id="PF01409">
    <property type="entry name" value="tRNA-synt_2d"/>
    <property type="match status" value="1"/>
</dbReference>
<dbReference type="SUPFAM" id="SSF55681">
    <property type="entry name" value="Class II aaRS and biotin synthetases"/>
    <property type="match status" value="1"/>
</dbReference>
<dbReference type="SUPFAM" id="SSF46589">
    <property type="entry name" value="tRNA-binding arm"/>
    <property type="match status" value="1"/>
</dbReference>
<dbReference type="PROSITE" id="PS50862">
    <property type="entry name" value="AA_TRNA_LIGASE_II"/>
    <property type="match status" value="1"/>
</dbReference>
<gene>
    <name evidence="1" type="primary">pheS</name>
    <name type="ordered locus">Pfl01_1935</name>
</gene>
<evidence type="ECO:0000255" key="1">
    <source>
        <dbReference type="HAMAP-Rule" id="MF_00281"/>
    </source>
</evidence>
<keyword id="KW-0030">Aminoacyl-tRNA synthetase</keyword>
<keyword id="KW-0067">ATP-binding</keyword>
<keyword id="KW-0963">Cytoplasm</keyword>
<keyword id="KW-0436">Ligase</keyword>
<keyword id="KW-0460">Magnesium</keyword>
<keyword id="KW-0479">Metal-binding</keyword>
<keyword id="KW-0547">Nucleotide-binding</keyword>
<keyword id="KW-0648">Protein biosynthesis</keyword>
<organism>
    <name type="scientific">Pseudomonas fluorescens (strain Pf0-1)</name>
    <dbReference type="NCBI Taxonomy" id="205922"/>
    <lineage>
        <taxon>Bacteria</taxon>
        <taxon>Pseudomonadati</taxon>
        <taxon>Pseudomonadota</taxon>
        <taxon>Gammaproteobacteria</taxon>
        <taxon>Pseudomonadales</taxon>
        <taxon>Pseudomonadaceae</taxon>
        <taxon>Pseudomonas</taxon>
    </lineage>
</organism>
<feature type="chain" id="PRO_0000232013" description="Phenylalanine--tRNA ligase alpha subunit">
    <location>
        <begin position="1"/>
        <end position="338"/>
    </location>
</feature>
<feature type="binding site" evidence="1">
    <location>
        <position position="252"/>
    </location>
    <ligand>
        <name>Mg(2+)</name>
        <dbReference type="ChEBI" id="CHEBI:18420"/>
        <note>shared with beta subunit</note>
    </ligand>
</feature>
<comment type="catalytic activity">
    <reaction evidence="1">
        <text>tRNA(Phe) + L-phenylalanine + ATP = L-phenylalanyl-tRNA(Phe) + AMP + diphosphate + H(+)</text>
        <dbReference type="Rhea" id="RHEA:19413"/>
        <dbReference type="Rhea" id="RHEA-COMP:9668"/>
        <dbReference type="Rhea" id="RHEA-COMP:9699"/>
        <dbReference type="ChEBI" id="CHEBI:15378"/>
        <dbReference type="ChEBI" id="CHEBI:30616"/>
        <dbReference type="ChEBI" id="CHEBI:33019"/>
        <dbReference type="ChEBI" id="CHEBI:58095"/>
        <dbReference type="ChEBI" id="CHEBI:78442"/>
        <dbReference type="ChEBI" id="CHEBI:78531"/>
        <dbReference type="ChEBI" id="CHEBI:456215"/>
        <dbReference type="EC" id="6.1.1.20"/>
    </reaction>
</comment>
<comment type="cofactor">
    <cofactor evidence="1">
        <name>Mg(2+)</name>
        <dbReference type="ChEBI" id="CHEBI:18420"/>
    </cofactor>
    <text evidence="1">Binds 2 magnesium ions per tetramer.</text>
</comment>
<comment type="subunit">
    <text evidence="1">Tetramer of two alpha and two beta subunits.</text>
</comment>
<comment type="subcellular location">
    <subcellularLocation>
        <location evidence="1">Cytoplasm</location>
    </subcellularLocation>
</comment>
<comment type="similarity">
    <text evidence="1">Belongs to the class-II aminoacyl-tRNA synthetase family. Phe-tRNA synthetase alpha subunit type 1 subfamily.</text>
</comment>
<name>SYFA_PSEPF</name>
<protein>
    <recommendedName>
        <fullName evidence="1">Phenylalanine--tRNA ligase alpha subunit</fullName>
        <ecNumber evidence="1">6.1.1.20</ecNumber>
    </recommendedName>
    <alternativeName>
        <fullName evidence="1">Phenylalanyl-tRNA synthetase alpha subunit</fullName>
        <shortName evidence="1">PheRS</shortName>
    </alternativeName>
</protein>
<sequence>MENLDALVSQALEAVQSAEDINALEQIRVQYLGKKGELTQVMKTLGNLPAEERPQVGALINVAKERVTGVLNARMALFEEAELAAKLSAESIDVTLPGRGQTSGGLHPVTRTLERIEQFFTHIGYGIAEGPEVEDDYHNFEALNIPGHHPARSMHDTFYFNANMLLRTHTSPVQVRTMESKKPPIRIVCPGRVYRSDSDITHSPMFHQVEGLLVDRDINFADLKGTIEEFLRVFFEKELAVRFRPSYFPFTEPSAEVDMECVMCSGKGCRVCKQTGWLEVMGCGMVHPNVLRMSGIDPEEFSGFAFGMGVERLAMLRYGVNDLRLFFDNDLRFLAQFR</sequence>
<proteinExistence type="inferred from homology"/>
<accession>Q3KEX8</accession>
<reference key="1">
    <citation type="journal article" date="2009" name="Genome Biol.">
        <title>Genomic and genetic analyses of diversity and plant interactions of Pseudomonas fluorescens.</title>
        <authorList>
            <person name="Silby M.W."/>
            <person name="Cerdeno-Tarraga A.M."/>
            <person name="Vernikos G.S."/>
            <person name="Giddens S.R."/>
            <person name="Jackson R.W."/>
            <person name="Preston G.M."/>
            <person name="Zhang X.-X."/>
            <person name="Moon C.D."/>
            <person name="Gehrig S.M."/>
            <person name="Godfrey S.A.C."/>
            <person name="Knight C.G."/>
            <person name="Malone J.G."/>
            <person name="Robinson Z."/>
            <person name="Spiers A.J."/>
            <person name="Harris S."/>
            <person name="Challis G.L."/>
            <person name="Yaxley A.M."/>
            <person name="Harris D."/>
            <person name="Seeger K."/>
            <person name="Murphy L."/>
            <person name="Rutter S."/>
            <person name="Squares R."/>
            <person name="Quail M.A."/>
            <person name="Saunders E."/>
            <person name="Mavromatis K."/>
            <person name="Brettin T.S."/>
            <person name="Bentley S.D."/>
            <person name="Hothersall J."/>
            <person name="Stephens E."/>
            <person name="Thomas C.M."/>
            <person name="Parkhill J."/>
            <person name="Levy S.B."/>
            <person name="Rainey P.B."/>
            <person name="Thomson N.R."/>
        </authorList>
    </citation>
    <scope>NUCLEOTIDE SEQUENCE [LARGE SCALE GENOMIC DNA]</scope>
    <source>
        <strain>Pf0-1</strain>
    </source>
</reference>